<feature type="signal peptide" evidence="2">
    <location>
        <begin position="1"/>
        <end position="21"/>
    </location>
</feature>
<feature type="propeptide" id="PRO_0000400903" evidence="4">
    <location>
        <begin position="22"/>
        <end position="74"/>
    </location>
</feature>
<feature type="peptide" id="PRO_0000400904" description="U11-theraphotoxin-Hhn1a">
    <location>
        <begin position="75"/>
        <end position="113"/>
    </location>
</feature>
<feature type="region of interest" description="Disordered" evidence="3">
    <location>
        <begin position="61"/>
        <end position="83"/>
    </location>
</feature>
<feature type="disulfide bond" evidence="1">
    <location>
        <begin position="75"/>
        <end position="90"/>
    </location>
</feature>
<feature type="disulfide bond" evidence="1">
    <location>
        <begin position="82"/>
        <end position="95"/>
    </location>
</feature>
<feature type="disulfide bond" evidence="1">
    <location>
        <begin position="89"/>
        <end position="110"/>
    </location>
</feature>
<evidence type="ECO:0000250" key="1"/>
<evidence type="ECO:0000255" key="2"/>
<evidence type="ECO:0000256" key="3">
    <source>
        <dbReference type="SAM" id="MobiDB-lite"/>
    </source>
</evidence>
<evidence type="ECO:0000269" key="4">
    <source>
    </source>
</evidence>
<evidence type="ECO:0000305" key="5"/>
<dbReference type="EMBL" id="GU292974">
    <property type="protein sequence ID" value="ADB56790.1"/>
    <property type="molecule type" value="mRNA"/>
</dbReference>
<dbReference type="ArachnoServer" id="AS001592">
    <property type="toxin name" value="U11-theraphotoxin-Hhn1a"/>
</dbReference>
<dbReference type="GO" id="GO:0005576">
    <property type="term" value="C:extracellular region"/>
    <property type="evidence" value="ECO:0007669"/>
    <property type="project" value="UniProtKB-SubCell"/>
</dbReference>
<dbReference type="GO" id="GO:0019871">
    <property type="term" value="F:sodium channel inhibitor activity"/>
    <property type="evidence" value="ECO:0007669"/>
    <property type="project" value="InterPro"/>
</dbReference>
<dbReference type="GO" id="GO:0090729">
    <property type="term" value="F:toxin activity"/>
    <property type="evidence" value="ECO:0007669"/>
    <property type="project" value="UniProtKB-KW"/>
</dbReference>
<dbReference type="InterPro" id="IPR012627">
    <property type="entry name" value="Toxin_22"/>
</dbReference>
<dbReference type="Pfam" id="PF08092">
    <property type="entry name" value="Toxin_22"/>
    <property type="match status" value="1"/>
</dbReference>
<organism>
    <name type="scientific">Cyriopagopus hainanus</name>
    <name type="common">Chinese bird spider</name>
    <name type="synonym">Haplopelma hainanum</name>
    <dbReference type="NCBI Taxonomy" id="209901"/>
    <lineage>
        <taxon>Eukaryota</taxon>
        <taxon>Metazoa</taxon>
        <taxon>Ecdysozoa</taxon>
        <taxon>Arthropoda</taxon>
        <taxon>Chelicerata</taxon>
        <taxon>Arachnida</taxon>
        <taxon>Araneae</taxon>
        <taxon>Mygalomorphae</taxon>
        <taxon>Theraphosidae</taxon>
        <taxon>Haplopelma</taxon>
    </lineage>
</organism>
<proteinExistence type="evidence at protein level"/>
<name>H1624_CYRHA</name>
<keyword id="KW-0903">Direct protein sequencing</keyword>
<keyword id="KW-1015">Disulfide bond</keyword>
<keyword id="KW-0872">Ion channel impairing toxin</keyword>
<keyword id="KW-0960">Knottin</keyword>
<keyword id="KW-0964">Secreted</keyword>
<keyword id="KW-0732">Signal</keyword>
<keyword id="KW-0800">Toxin</keyword>
<accession>D2Y297</accession>
<protein>
    <recommendedName>
        <fullName>U11-theraphotoxin-Hhn1a</fullName>
        <shortName>U11-TRTX-Hhn1a</shortName>
    </recommendedName>
    <alternativeName>
        <fullName>Hainantoxin-XVI.24</fullName>
        <shortName>NTX-XVI.24</shortName>
    </alternativeName>
    <alternativeName>
        <fullName>Peptide F4-19.87</fullName>
    </alternativeName>
</protein>
<comment type="function">
    <text evidence="1">Probable ion channel inhibitor.</text>
</comment>
<comment type="subcellular location">
    <subcellularLocation>
        <location>Secreted</location>
    </subcellularLocation>
</comment>
<comment type="tissue specificity">
    <text>Expressed by the venom gland.</text>
</comment>
<comment type="domain">
    <text evidence="1">The presence of a 'disulfide through disulfide knot' structurally defines this protein as a knottin.</text>
</comment>
<comment type="similarity">
    <text evidence="5">Belongs to the neurotoxin 14 (magi-1) family. 01 (HNTX-16) subfamily.</text>
</comment>
<reference key="1">
    <citation type="journal article" date="2010" name="J. Proteome Res.">
        <title>Molecular diversification of peptide toxins from the tarantula Haplopelma hainanum (Ornithoctonus hainana) venom based on transcriptomic, peptidomic, and genomic analyses.</title>
        <authorList>
            <person name="Tang X."/>
            <person name="Zhang Y."/>
            <person name="Hu W."/>
            <person name="Xu D."/>
            <person name="Tao H."/>
            <person name="Yang X."/>
            <person name="Li Y."/>
            <person name="Jiang L."/>
            <person name="Liang S."/>
        </authorList>
    </citation>
    <scope>NUCLEOTIDE SEQUENCE [LARGE SCALE MRNA]</scope>
    <scope>PROTEIN SEQUENCE OF 75-113</scope>
    <scope>IDENTIFICATION BY MASS SPECTROMETRY</scope>
    <source>
        <tissue>Venom</tissue>
        <tissue>Venom gland</tissue>
    </source>
</reference>
<sequence length="113" mass="13117">MNTVRVTFLLVFVLAVSLGQADKDENRMEMQEKTEQGRSYLDFAENLLLQKLEELEAKLLEEDSEESRNSRQKRCIGEGVPCDENDPRCCSGLVCLKPTLHGIWYKSYYCYKK</sequence>